<reference key="1">
    <citation type="journal article" date="2007" name="Genome Res.">
        <title>Reductive evolution and niche adaptation inferred from the genome of Mycobacterium ulcerans, the causative agent of Buruli ulcer.</title>
        <authorList>
            <person name="Stinear T.P."/>
            <person name="Seemann T."/>
            <person name="Pidot S."/>
            <person name="Frigui W."/>
            <person name="Reysset G."/>
            <person name="Garnier T."/>
            <person name="Meurice G."/>
            <person name="Simon D."/>
            <person name="Bouchier C."/>
            <person name="Ma L."/>
            <person name="Tichit M."/>
            <person name="Porter J.L."/>
            <person name="Ryan J."/>
            <person name="Johnson P.D.R."/>
            <person name="Davies J.K."/>
            <person name="Jenkin G.A."/>
            <person name="Small P.L.C."/>
            <person name="Jones L.M."/>
            <person name="Tekaia F."/>
            <person name="Laval F."/>
            <person name="Daffe M."/>
            <person name="Parkhill J."/>
            <person name="Cole S.T."/>
        </authorList>
    </citation>
    <scope>NUCLEOTIDE SEQUENCE [LARGE SCALE GENOMIC DNA]</scope>
    <source>
        <strain>Agy99</strain>
    </source>
</reference>
<gene>
    <name evidence="1" type="primary">rplU</name>
    <name type="ordered locus">MUL_3714</name>
</gene>
<dbReference type="EMBL" id="CP000325">
    <property type="protein sequence ID" value="ABL05836.1"/>
    <property type="molecule type" value="Genomic_DNA"/>
</dbReference>
<dbReference type="RefSeq" id="WP_011741441.1">
    <property type="nucleotide sequence ID" value="NC_008611.1"/>
</dbReference>
<dbReference type="SMR" id="A0PU17"/>
<dbReference type="GeneID" id="93438112"/>
<dbReference type="KEGG" id="mul:MUL_3714"/>
<dbReference type="eggNOG" id="COG0261">
    <property type="taxonomic scope" value="Bacteria"/>
</dbReference>
<dbReference type="HOGENOM" id="CLU_061463_3_0_11"/>
<dbReference type="Proteomes" id="UP000000765">
    <property type="component" value="Chromosome"/>
</dbReference>
<dbReference type="GO" id="GO:0005737">
    <property type="term" value="C:cytoplasm"/>
    <property type="evidence" value="ECO:0007669"/>
    <property type="project" value="UniProtKB-ARBA"/>
</dbReference>
<dbReference type="GO" id="GO:1990904">
    <property type="term" value="C:ribonucleoprotein complex"/>
    <property type="evidence" value="ECO:0007669"/>
    <property type="project" value="UniProtKB-KW"/>
</dbReference>
<dbReference type="GO" id="GO:0005840">
    <property type="term" value="C:ribosome"/>
    <property type="evidence" value="ECO:0007669"/>
    <property type="project" value="UniProtKB-KW"/>
</dbReference>
<dbReference type="GO" id="GO:0019843">
    <property type="term" value="F:rRNA binding"/>
    <property type="evidence" value="ECO:0007669"/>
    <property type="project" value="UniProtKB-UniRule"/>
</dbReference>
<dbReference type="GO" id="GO:0003735">
    <property type="term" value="F:structural constituent of ribosome"/>
    <property type="evidence" value="ECO:0007669"/>
    <property type="project" value="InterPro"/>
</dbReference>
<dbReference type="GO" id="GO:0006412">
    <property type="term" value="P:translation"/>
    <property type="evidence" value="ECO:0007669"/>
    <property type="project" value="UniProtKB-UniRule"/>
</dbReference>
<dbReference type="HAMAP" id="MF_01363">
    <property type="entry name" value="Ribosomal_bL21"/>
    <property type="match status" value="1"/>
</dbReference>
<dbReference type="InterPro" id="IPR028909">
    <property type="entry name" value="bL21-like"/>
</dbReference>
<dbReference type="InterPro" id="IPR036164">
    <property type="entry name" value="bL21-like_sf"/>
</dbReference>
<dbReference type="InterPro" id="IPR001787">
    <property type="entry name" value="Ribosomal_bL21"/>
</dbReference>
<dbReference type="InterPro" id="IPR018258">
    <property type="entry name" value="Ribosomal_bL21_CS"/>
</dbReference>
<dbReference type="NCBIfam" id="TIGR00061">
    <property type="entry name" value="L21"/>
    <property type="match status" value="1"/>
</dbReference>
<dbReference type="PANTHER" id="PTHR21349">
    <property type="entry name" value="50S RIBOSOMAL PROTEIN L21"/>
    <property type="match status" value="1"/>
</dbReference>
<dbReference type="PANTHER" id="PTHR21349:SF0">
    <property type="entry name" value="LARGE RIBOSOMAL SUBUNIT PROTEIN BL21M"/>
    <property type="match status" value="1"/>
</dbReference>
<dbReference type="Pfam" id="PF00829">
    <property type="entry name" value="Ribosomal_L21p"/>
    <property type="match status" value="1"/>
</dbReference>
<dbReference type="SUPFAM" id="SSF141091">
    <property type="entry name" value="L21p-like"/>
    <property type="match status" value="1"/>
</dbReference>
<dbReference type="PROSITE" id="PS01169">
    <property type="entry name" value="RIBOSOMAL_L21"/>
    <property type="match status" value="1"/>
</dbReference>
<proteinExistence type="inferred from homology"/>
<accession>A0PU17</accession>
<protein>
    <recommendedName>
        <fullName evidence="1">Large ribosomal subunit protein bL21</fullName>
    </recommendedName>
    <alternativeName>
        <fullName evidence="2">50S ribosomal protein L21</fullName>
    </alternativeName>
</protein>
<feature type="chain" id="PRO_1000067860" description="Large ribosomal subunit protein bL21">
    <location>
        <begin position="1"/>
        <end position="103"/>
    </location>
</feature>
<organism>
    <name type="scientific">Mycobacterium ulcerans (strain Agy99)</name>
    <dbReference type="NCBI Taxonomy" id="362242"/>
    <lineage>
        <taxon>Bacteria</taxon>
        <taxon>Bacillati</taxon>
        <taxon>Actinomycetota</taxon>
        <taxon>Actinomycetes</taxon>
        <taxon>Mycobacteriales</taxon>
        <taxon>Mycobacteriaceae</taxon>
        <taxon>Mycobacterium</taxon>
        <taxon>Mycobacterium ulcerans group</taxon>
    </lineage>
</organism>
<name>RL21_MYCUA</name>
<sequence>MATYAIVKTGGKQYKVAVGDVVKVEKLESEPGAKVSLPVALVVDGAAVTSDADALAKVAVTGEVLEHVKGPKIRIHKFKNKTGYHKRQGHRQQLTVLKVTGIK</sequence>
<comment type="function">
    <text evidence="1">This protein binds to 23S rRNA in the presence of protein L20.</text>
</comment>
<comment type="subunit">
    <text evidence="1">Part of the 50S ribosomal subunit. Contacts protein L20.</text>
</comment>
<comment type="similarity">
    <text evidence="1">Belongs to the bacterial ribosomal protein bL21 family.</text>
</comment>
<keyword id="KW-0687">Ribonucleoprotein</keyword>
<keyword id="KW-0689">Ribosomal protein</keyword>
<keyword id="KW-0694">RNA-binding</keyword>
<keyword id="KW-0699">rRNA-binding</keyword>
<evidence type="ECO:0000255" key="1">
    <source>
        <dbReference type="HAMAP-Rule" id="MF_01363"/>
    </source>
</evidence>
<evidence type="ECO:0000305" key="2"/>